<evidence type="ECO:0000255" key="1"/>
<evidence type="ECO:0000305" key="2"/>
<sequence>MYIEGVKIKKIAMFFLGILVGVFIVLFFRNYFVLLLEYIFG</sequence>
<organism>
    <name type="scientific">Streptococcus pneumoniae serotype 2 (strain D39 / NCTC 7466)</name>
    <dbReference type="NCBI Taxonomy" id="373153"/>
    <lineage>
        <taxon>Bacteria</taxon>
        <taxon>Bacillati</taxon>
        <taxon>Bacillota</taxon>
        <taxon>Bacilli</taxon>
        <taxon>Lactobacillales</taxon>
        <taxon>Streptococcaceae</taxon>
        <taxon>Streptococcus</taxon>
    </lineage>
</organism>
<gene>
    <name type="ordered locus">SPD_2301</name>
    <name type="ORF">orf1</name>
</gene>
<name>Y2301_STRP2</name>
<feature type="chain" id="PRO_0000275930" description="Uncharacterized membrane protein SPD_2301">
    <location>
        <begin position="1"/>
        <end position="41"/>
    </location>
</feature>
<feature type="transmembrane region" description="Helical" evidence="1">
    <location>
        <begin position="8"/>
        <end position="28"/>
    </location>
</feature>
<keyword id="KW-0472">Membrane</keyword>
<keyword id="KW-0614">Plasmid</keyword>
<keyword id="KW-1185">Reference proteome</keyword>
<keyword id="KW-0812">Transmembrane</keyword>
<keyword id="KW-1133">Transmembrane helix</keyword>
<reference key="1">
    <citation type="journal article" date="1999" name="Plasmid">
        <title>Characterization of cryptic plasmids pDP1 and pSMB1 of Streptococcus pneumoniae.</title>
        <authorList>
            <person name="Oggioni M.R."/>
            <person name="Iannelli F."/>
            <person name="Pozzi G."/>
        </authorList>
    </citation>
    <scope>NUCLEOTIDE SEQUENCE [LARGE SCALE GENOMIC DNA]</scope>
    <source>
        <strain>D39 / NCTC 7466</strain>
    </source>
</reference>
<protein>
    <recommendedName>
        <fullName>Uncharacterized membrane protein SPD_2301</fullName>
    </recommendedName>
</protein>
<dbReference type="EMBL" id="AF047696">
    <property type="status" value="NOT_ANNOTATED_CDS"/>
    <property type="molecule type" value="Genomic_DNA"/>
</dbReference>
<dbReference type="SMR" id="P0C2G8"/>
<dbReference type="Proteomes" id="UP000001452">
    <property type="component" value="Plasmid pDP1"/>
</dbReference>
<dbReference type="GO" id="GO:0016020">
    <property type="term" value="C:membrane"/>
    <property type="evidence" value="ECO:0007669"/>
    <property type="project" value="UniProtKB-SubCell"/>
</dbReference>
<proteinExistence type="predicted"/>
<geneLocation type="plasmid">
    <name>pDP1</name>
</geneLocation>
<accession>P0C2G8</accession>
<comment type="subcellular location">
    <subcellularLocation>
        <location evidence="2">Membrane</location>
        <topology evidence="2">Single-pass membrane protein</topology>
    </subcellularLocation>
</comment>